<name>DDL_RALPJ</name>
<keyword id="KW-0067">ATP-binding</keyword>
<keyword id="KW-0133">Cell shape</keyword>
<keyword id="KW-0961">Cell wall biogenesis/degradation</keyword>
<keyword id="KW-0963">Cytoplasm</keyword>
<keyword id="KW-0436">Ligase</keyword>
<keyword id="KW-0460">Magnesium</keyword>
<keyword id="KW-0464">Manganese</keyword>
<keyword id="KW-0479">Metal-binding</keyword>
<keyword id="KW-0547">Nucleotide-binding</keyword>
<keyword id="KW-0573">Peptidoglycan synthesis</keyword>
<feature type="chain" id="PRO_1000091206" description="D-alanine--D-alanine ligase">
    <location>
        <begin position="1"/>
        <end position="331"/>
    </location>
</feature>
<feature type="domain" description="ATP-grasp" evidence="2">
    <location>
        <begin position="116"/>
        <end position="316"/>
    </location>
</feature>
<feature type="binding site" evidence="2">
    <location>
        <begin position="142"/>
        <end position="197"/>
    </location>
    <ligand>
        <name>ATP</name>
        <dbReference type="ChEBI" id="CHEBI:30616"/>
    </ligand>
</feature>
<feature type="binding site" evidence="2">
    <location>
        <position position="269"/>
    </location>
    <ligand>
        <name>Mg(2+)</name>
        <dbReference type="ChEBI" id="CHEBI:18420"/>
        <label>1</label>
    </ligand>
</feature>
<feature type="binding site" evidence="2">
    <location>
        <position position="283"/>
    </location>
    <ligand>
        <name>Mg(2+)</name>
        <dbReference type="ChEBI" id="CHEBI:18420"/>
        <label>1</label>
    </ligand>
</feature>
<feature type="binding site" evidence="2">
    <location>
        <position position="283"/>
    </location>
    <ligand>
        <name>Mg(2+)</name>
        <dbReference type="ChEBI" id="CHEBI:18420"/>
        <label>2</label>
    </ligand>
</feature>
<feature type="binding site" evidence="2">
    <location>
        <position position="285"/>
    </location>
    <ligand>
        <name>Mg(2+)</name>
        <dbReference type="ChEBI" id="CHEBI:18420"/>
        <label>2</label>
    </ligand>
</feature>
<comment type="function">
    <text evidence="2">Cell wall formation.</text>
</comment>
<comment type="catalytic activity">
    <reaction evidence="2">
        <text>2 D-alanine + ATP = D-alanyl-D-alanine + ADP + phosphate + H(+)</text>
        <dbReference type="Rhea" id="RHEA:11224"/>
        <dbReference type="ChEBI" id="CHEBI:15378"/>
        <dbReference type="ChEBI" id="CHEBI:30616"/>
        <dbReference type="ChEBI" id="CHEBI:43474"/>
        <dbReference type="ChEBI" id="CHEBI:57416"/>
        <dbReference type="ChEBI" id="CHEBI:57822"/>
        <dbReference type="ChEBI" id="CHEBI:456216"/>
        <dbReference type="EC" id="6.3.2.4"/>
    </reaction>
</comment>
<comment type="cofactor">
    <cofactor evidence="1">
        <name>Mg(2+)</name>
        <dbReference type="ChEBI" id="CHEBI:18420"/>
    </cofactor>
    <cofactor evidence="1">
        <name>Mn(2+)</name>
        <dbReference type="ChEBI" id="CHEBI:29035"/>
    </cofactor>
    <text evidence="1">Binds 2 magnesium or manganese ions per subunit.</text>
</comment>
<comment type="pathway">
    <text evidence="2">Cell wall biogenesis; peptidoglycan biosynthesis.</text>
</comment>
<comment type="subcellular location">
    <subcellularLocation>
        <location evidence="2">Cytoplasm</location>
    </subcellularLocation>
</comment>
<comment type="similarity">
    <text evidence="2">Belongs to the D-alanine--D-alanine ligase family.</text>
</comment>
<protein>
    <recommendedName>
        <fullName evidence="2">D-alanine--D-alanine ligase</fullName>
        <ecNumber evidence="2">6.3.2.4</ecNumber>
    </recommendedName>
    <alternativeName>
        <fullName evidence="2">D-Ala-D-Ala ligase</fullName>
    </alternativeName>
    <alternativeName>
        <fullName evidence="2">D-alanylalanine synthetase</fullName>
    </alternativeName>
</protein>
<reference key="1">
    <citation type="submission" date="2008-05" db="EMBL/GenBank/DDBJ databases">
        <title>Complete sequence of chromosome 1 of Ralstonia pickettii 12J.</title>
        <authorList>
            <person name="Lucas S."/>
            <person name="Copeland A."/>
            <person name="Lapidus A."/>
            <person name="Glavina del Rio T."/>
            <person name="Dalin E."/>
            <person name="Tice H."/>
            <person name="Bruce D."/>
            <person name="Goodwin L."/>
            <person name="Pitluck S."/>
            <person name="Meincke L."/>
            <person name="Brettin T."/>
            <person name="Detter J.C."/>
            <person name="Han C."/>
            <person name="Kuske C.R."/>
            <person name="Schmutz J."/>
            <person name="Larimer F."/>
            <person name="Land M."/>
            <person name="Hauser L."/>
            <person name="Kyrpides N."/>
            <person name="Mikhailova N."/>
            <person name="Marsh T."/>
            <person name="Richardson P."/>
        </authorList>
    </citation>
    <scope>NUCLEOTIDE SEQUENCE [LARGE SCALE GENOMIC DNA]</scope>
    <source>
        <strain>12J</strain>
    </source>
</reference>
<gene>
    <name evidence="2" type="primary">ddl</name>
    <name type="ordered locus">Rpic_3087</name>
</gene>
<accession>B2UCX5</accession>
<sequence length="331" mass="35330">MTTGPFVPNPTIDPKSLGKVGVLMGGRSAEREISLMSGNGVLAALRARGVDAHAFDPGLQAVADLAKQGFDRVVISLHGRFGEDGTIQGLLEQFGIPYTGSGVLASALAMDKEATKRQWQTHGLPTPDFVMLHAGADWQAVADRLGLPLIVKPAREGSSIGLTKVTSVAELPAAYEKAARLDRDVMAEQFIEGDELTCPIIGEGESATALPLIRIVAPQANYDYQNKYFTDDTRYECPAPIPADVAARVQALVVQAYRGLGCRGWGRADIMLRKSDNAPFLLEMNTSPGMTGHSLVPMGARAAGISYEDFVLQLAASASLELHASTDWKPE</sequence>
<organism>
    <name type="scientific">Ralstonia pickettii (strain 12J)</name>
    <dbReference type="NCBI Taxonomy" id="402626"/>
    <lineage>
        <taxon>Bacteria</taxon>
        <taxon>Pseudomonadati</taxon>
        <taxon>Pseudomonadota</taxon>
        <taxon>Betaproteobacteria</taxon>
        <taxon>Burkholderiales</taxon>
        <taxon>Burkholderiaceae</taxon>
        <taxon>Ralstonia</taxon>
    </lineage>
</organism>
<dbReference type="EC" id="6.3.2.4" evidence="2"/>
<dbReference type="EMBL" id="CP001068">
    <property type="protein sequence ID" value="ACD28210.1"/>
    <property type="molecule type" value="Genomic_DNA"/>
</dbReference>
<dbReference type="SMR" id="B2UCX5"/>
<dbReference type="STRING" id="402626.Rpic_3087"/>
<dbReference type="KEGG" id="rpi:Rpic_3087"/>
<dbReference type="PATRIC" id="fig|402626.5.peg.4225"/>
<dbReference type="eggNOG" id="COG1181">
    <property type="taxonomic scope" value="Bacteria"/>
</dbReference>
<dbReference type="HOGENOM" id="CLU_039268_1_2_4"/>
<dbReference type="UniPathway" id="UPA00219"/>
<dbReference type="GO" id="GO:0005829">
    <property type="term" value="C:cytosol"/>
    <property type="evidence" value="ECO:0007669"/>
    <property type="project" value="TreeGrafter"/>
</dbReference>
<dbReference type="GO" id="GO:0005524">
    <property type="term" value="F:ATP binding"/>
    <property type="evidence" value="ECO:0007669"/>
    <property type="project" value="UniProtKB-KW"/>
</dbReference>
<dbReference type="GO" id="GO:0008716">
    <property type="term" value="F:D-alanine-D-alanine ligase activity"/>
    <property type="evidence" value="ECO:0007669"/>
    <property type="project" value="UniProtKB-UniRule"/>
</dbReference>
<dbReference type="GO" id="GO:0046872">
    <property type="term" value="F:metal ion binding"/>
    <property type="evidence" value="ECO:0007669"/>
    <property type="project" value="UniProtKB-KW"/>
</dbReference>
<dbReference type="GO" id="GO:0071555">
    <property type="term" value="P:cell wall organization"/>
    <property type="evidence" value="ECO:0007669"/>
    <property type="project" value="UniProtKB-KW"/>
</dbReference>
<dbReference type="GO" id="GO:0009252">
    <property type="term" value="P:peptidoglycan biosynthetic process"/>
    <property type="evidence" value="ECO:0007669"/>
    <property type="project" value="UniProtKB-UniRule"/>
</dbReference>
<dbReference type="GO" id="GO:0008360">
    <property type="term" value="P:regulation of cell shape"/>
    <property type="evidence" value="ECO:0007669"/>
    <property type="project" value="UniProtKB-KW"/>
</dbReference>
<dbReference type="FunFam" id="3.40.50.20:FF:000013">
    <property type="entry name" value="D-alanine--D-alanine ligase"/>
    <property type="match status" value="1"/>
</dbReference>
<dbReference type="Gene3D" id="3.40.50.20">
    <property type="match status" value="1"/>
</dbReference>
<dbReference type="Gene3D" id="3.30.1490.20">
    <property type="entry name" value="ATP-grasp fold, A domain"/>
    <property type="match status" value="1"/>
</dbReference>
<dbReference type="Gene3D" id="3.30.470.20">
    <property type="entry name" value="ATP-grasp fold, B domain"/>
    <property type="match status" value="1"/>
</dbReference>
<dbReference type="HAMAP" id="MF_00047">
    <property type="entry name" value="Dala_Dala_lig"/>
    <property type="match status" value="1"/>
</dbReference>
<dbReference type="InterPro" id="IPR011761">
    <property type="entry name" value="ATP-grasp"/>
</dbReference>
<dbReference type="InterPro" id="IPR013815">
    <property type="entry name" value="ATP_grasp_subdomain_1"/>
</dbReference>
<dbReference type="InterPro" id="IPR000291">
    <property type="entry name" value="D-Ala_lig_Van_CS"/>
</dbReference>
<dbReference type="InterPro" id="IPR005905">
    <property type="entry name" value="D_ala_D_ala"/>
</dbReference>
<dbReference type="InterPro" id="IPR011095">
    <property type="entry name" value="Dala_Dala_lig_C"/>
</dbReference>
<dbReference type="InterPro" id="IPR011127">
    <property type="entry name" value="Dala_Dala_lig_N"/>
</dbReference>
<dbReference type="InterPro" id="IPR016185">
    <property type="entry name" value="PreATP-grasp_dom_sf"/>
</dbReference>
<dbReference type="NCBIfam" id="TIGR01205">
    <property type="entry name" value="D_ala_D_alaTIGR"/>
    <property type="match status" value="1"/>
</dbReference>
<dbReference type="NCBIfam" id="NF002378">
    <property type="entry name" value="PRK01372.1"/>
    <property type="match status" value="1"/>
</dbReference>
<dbReference type="PANTHER" id="PTHR23132">
    <property type="entry name" value="D-ALANINE--D-ALANINE LIGASE"/>
    <property type="match status" value="1"/>
</dbReference>
<dbReference type="PANTHER" id="PTHR23132:SF23">
    <property type="entry name" value="D-ALANINE--D-ALANINE LIGASE B"/>
    <property type="match status" value="1"/>
</dbReference>
<dbReference type="Pfam" id="PF07478">
    <property type="entry name" value="Dala_Dala_lig_C"/>
    <property type="match status" value="1"/>
</dbReference>
<dbReference type="Pfam" id="PF01820">
    <property type="entry name" value="Dala_Dala_lig_N"/>
    <property type="match status" value="1"/>
</dbReference>
<dbReference type="PIRSF" id="PIRSF039102">
    <property type="entry name" value="Ddl/VanB"/>
    <property type="match status" value="1"/>
</dbReference>
<dbReference type="SUPFAM" id="SSF56059">
    <property type="entry name" value="Glutathione synthetase ATP-binding domain-like"/>
    <property type="match status" value="1"/>
</dbReference>
<dbReference type="SUPFAM" id="SSF52440">
    <property type="entry name" value="PreATP-grasp domain"/>
    <property type="match status" value="1"/>
</dbReference>
<dbReference type="PROSITE" id="PS50975">
    <property type="entry name" value="ATP_GRASP"/>
    <property type="match status" value="1"/>
</dbReference>
<dbReference type="PROSITE" id="PS00843">
    <property type="entry name" value="DALA_DALA_LIGASE_1"/>
    <property type="match status" value="1"/>
</dbReference>
<dbReference type="PROSITE" id="PS00844">
    <property type="entry name" value="DALA_DALA_LIGASE_2"/>
    <property type="match status" value="1"/>
</dbReference>
<evidence type="ECO:0000250" key="1"/>
<evidence type="ECO:0000255" key="2">
    <source>
        <dbReference type="HAMAP-Rule" id="MF_00047"/>
    </source>
</evidence>
<proteinExistence type="inferred from homology"/>